<dbReference type="GO" id="GO:0005576">
    <property type="term" value="C:extracellular region"/>
    <property type="evidence" value="ECO:0007669"/>
    <property type="project" value="UniProtKB-SubCell"/>
</dbReference>
<dbReference type="GO" id="GO:0005179">
    <property type="term" value="F:hormone activity"/>
    <property type="evidence" value="ECO:0007669"/>
    <property type="project" value="UniProtKB-KW"/>
</dbReference>
<dbReference type="GO" id="GO:0007218">
    <property type="term" value="P:neuropeptide signaling pathway"/>
    <property type="evidence" value="ECO:0007669"/>
    <property type="project" value="UniProtKB-KW"/>
</dbReference>
<dbReference type="InterPro" id="IPR002047">
    <property type="entry name" value="Adipokinetic_hormone_CS"/>
</dbReference>
<dbReference type="PROSITE" id="PS00256">
    <property type="entry name" value="AKH"/>
    <property type="match status" value="1"/>
</dbReference>
<organism>
    <name type="scientific">Therea petiveriana</name>
    <name type="common">Domino cockroach</name>
    <dbReference type="NCBI Taxonomy" id="45965"/>
    <lineage>
        <taxon>Eukaryota</taxon>
        <taxon>Metazoa</taxon>
        <taxon>Ecdysozoa</taxon>
        <taxon>Arthropoda</taxon>
        <taxon>Hexapoda</taxon>
        <taxon>Insecta</taxon>
        <taxon>Pterygota</taxon>
        <taxon>Neoptera</taxon>
        <taxon>Polyneoptera</taxon>
        <taxon>Dictyoptera</taxon>
        <taxon>Blattodea</taxon>
        <taxon>Corydioidea</taxon>
        <taxon>Corydiidae</taxon>
        <taxon>Therea</taxon>
    </lineage>
</organism>
<proteinExistence type="evidence at protein level"/>
<sequence>QLNFSPNW</sequence>
<name>HTF_THEPT</name>
<protein>
    <recommendedName>
        <fullName evidence="1">Hypertrehalosaemic factor</fullName>
    </recommendedName>
    <alternativeName>
        <fullName evidence="4">Adipokinetic hormone 1</fullName>
        <shortName evidence="4">ThePe-AKH-1</shortName>
    </alternativeName>
    <alternativeName>
        <fullName evidence="1">Hypertrehalosaemic neuropeptide</fullName>
    </alternativeName>
</protein>
<comment type="function">
    <text evidence="5">Hypertrehalosaemic factors are neuropeptides that elevate the level of trehalose in the hemolymph (trehalose is the major carbohydrate in the hemolymph of insects).</text>
</comment>
<comment type="subcellular location">
    <subcellularLocation>
        <location evidence="5">Secreted</location>
    </subcellularLocation>
</comment>
<comment type="similarity">
    <text evidence="2">Belongs to the AKH/HRTH/RPCH family.</text>
</comment>
<reference evidence="5" key="1">
    <citation type="journal article" date="2009" name="BMC Evol. Biol.">
        <title>A proteomic approach for studying insect phylogeny: CAPA peptides of ancient insect taxa (Dictyoptera, Blattoptera) as a test case.</title>
        <authorList>
            <person name="Roth S."/>
            <person name="Fromm B."/>
            <person name="Gaede G."/>
            <person name="Predel R."/>
        </authorList>
    </citation>
    <scope>PROTEIN SEQUENCE</scope>
    <scope>PYROGLUTAMATE FORMATION AT GLN-1</scope>
    <scope>AMIDATION AT TRP-8</scope>
    <source>
        <tissue evidence="3">Corpora cardiaca</tissue>
    </source>
</reference>
<feature type="peptide" id="PRO_0000378675" description="Hypertrehalosaemic factor" evidence="3">
    <location>
        <begin position="1"/>
        <end position="8"/>
    </location>
</feature>
<feature type="modified residue" description="Pyrrolidone carboxylic acid" evidence="3">
    <location>
        <position position="1"/>
    </location>
</feature>
<feature type="modified residue" description="Tryptophan amide" evidence="3">
    <location>
        <position position="8"/>
    </location>
</feature>
<accession>P85791</accession>
<evidence type="ECO:0000250" key="1">
    <source>
        <dbReference type="UniProtKB" id="P67790"/>
    </source>
</evidence>
<evidence type="ECO:0000255" key="2"/>
<evidence type="ECO:0000269" key="3">
    <source>
    </source>
</evidence>
<evidence type="ECO:0000303" key="4">
    <source>
    </source>
</evidence>
<evidence type="ECO:0000305" key="5"/>
<keyword id="KW-0027">Amidation</keyword>
<keyword id="KW-0903">Direct protein sequencing</keyword>
<keyword id="KW-0372">Hormone</keyword>
<keyword id="KW-0527">Neuropeptide</keyword>
<keyword id="KW-0873">Pyrrolidone carboxylic acid</keyword>
<keyword id="KW-0964">Secreted</keyword>